<feature type="chain" id="PRO_1000051246" description="Small ribosomal subunit protein uS9">
    <location>
        <begin position="1"/>
        <end position="168"/>
    </location>
</feature>
<feature type="region of interest" description="Disordered" evidence="2">
    <location>
        <begin position="1"/>
        <end position="38"/>
    </location>
</feature>
<feature type="compositionally biased region" description="Polar residues" evidence="2">
    <location>
        <begin position="9"/>
        <end position="22"/>
    </location>
</feature>
<feature type="compositionally biased region" description="Low complexity" evidence="2">
    <location>
        <begin position="23"/>
        <end position="37"/>
    </location>
</feature>
<proteinExistence type="inferred from homology"/>
<dbReference type="EMBL" id="AE016822">
    <property type="protein sequence ID" value="AAT89717.1"/>
    <property type="molecule type" value="Genomic_DNA"/>
</dbReference>
<dbReference type="RefSeq" id="WP_011186703.1">
    <property type="nucleotide sequence ID" value="NC_006087.1"/>
</dbReference>
<dbReference type="SMR" id="Q6AD27"/>
<dbReference type="STRING" id="281090.Lxx20020"/>
<dbReference type="KEGG" id="lxx:Lxx20020"/>
<dbReference type="eggNOG" id="COG0103">
    <property type="taxonomic scope" value="Bacteria"/>
</dbReference>
<dbReference type="HOGENOM" id="CLU_046483_2_0_11"/>
<dbReference type="Proteomes" id="UP000001306">
    <property type="component" value="Chromosome"/>
</dbReference>
<dbReference type="GO" id="GO:0005737">
    <property type="term" value="C:cytoplasm"/>
    <property type="evidence" value="ECO:0007669"/>
    <property type="project" value="UniProtKB-ARBA"/>
</dbReference>
<dbReference type="GO" id="GO:0015935">
    <property type="term" value="C:small ribosomal subunit"/>
    <property type="evidence" value="ECO:0007669"/>
    <property type="project" value="TreeGrafter"/>
</dbReference>
<dbReference type="GO" id="GO:0003723">
    <property type="term" value="F:RNA binding"/>
    <property type="evidence" value="ECO:0007669"/>
    <property type="project" value="TreeGrafter"/>
</dbReference>
<dbReference type="GO" id="GO:0003735">
    <property type="term" value="F:structural constituent of ribosome"/>
    <property type="evidence" value="ECO:0007669"/>
    <property type="project" value="InterPro"/>
</dbReference>
<dbReference type="GO" id="GO:0006412">
    <property type="term" value="P:translation"/>
    <property type="evidence" value="ECO:0007669"/>
    <property type="project" value="UniProtKB-UniRule"/>
</dbReference>
<dbReference type="FunFam" id="3.30.230.10:FF:000001">
    <property type="entry name" value="30S ribosomal protein S9"/>
    <property type="match status" value="1"/>
</dbReference>
<dbReference type="Gene3D" id="3.30.230.10">
    <property type="match status" value="1"/>
</dbReference>
<dbReference type="HAMAP" id="MF_00532_B">
    <property type="entry name" value="Ribosomal_uS9_B"/>
    <property type="match status" value="1"/>
</dbReference>
<dbReference type="InterPro" id="IPR020568">
    <property type="entry name" value="Ribosomal_Su5_D2-typ_SF"/>
</dbReference>
<dbReference type="InterPro" id="IPR000754">
    <property type="entry name" value="Ribosomal_uS9"/>
</dbReference>
<dbReference type="InterPro" id="IPR023035">
    <property type="entry name" value="Ribosomal_uS9_bac/plastid"/>
</dbReference>
<dbReference type="InterPro" id="IPR020574">
    <property type="entry name" value="Ribosomal_uS9_CS"/>
</dbReference>
<dbReference type="InterPro" id="IPR014721">
    <property type="entry name" value="Ribsml_uS5_D2-typ_fold_subgr"/>
</dbReference>
<dbReference type="NCBIfam" id="NF001099">
    <property type="entry name" value="PRK00132.1"/>
    <property type="match status" value="1"/>
</dbReference>
<dbReference type="PANTHER" id="PTHR21569">
    <property type="entry name" value="RIBOSOMAL PROTEIN S9"/>
    <property type="match status" value="1"/>
</dbReference>
<dbReference type="PANTHER" id="PTHR21569:SF1">
    <property type="entry name" value="SMALL RIBOSOMAL SUBUNIT PROTEIN US9M"/>
    <property type="match status" value="1"/>
</dbReference>
<dbReference type="Pfam" id="PF00380">
    <property type="entry name" value="Ribosomal_S9"/>
    <property type="match status" value="1"/>
</dbReference>
<dbReference type="SUPFAM" id="SSF54211">
    <property type="entry name" value="Ribosomal protein S5 domain 2-like"/>
    <property type="match status" value="1"/>
</dbReference>
<dbReference type="PROSITE" id="PS00360">
    <property type="entry name" value="RIBOSOMAL_S9"/>
    <property type="match status" value="1"/>
</dbReference>
<protein>
    <recommendedName>
        <fullName evidence="1">Small ribosomal subunit protein uS9</fullName>
    </recommendedName>
    <alternativeName>
        <fullName evidence="3">30S ribosomal protein S9</fullName>
    </alternativeName>
</protein>
<name>RS9_LEIXX</name>
<sequence>MAKIADSIDSAQADSVENVESYSTETPESAAPAAPRPVLSVPGAAVGRRKEAIARVRLVPGAGAVTVNGRAFADYFPNKLHQQLITDPFKVLDLVGSYDVIARITGGGPSGQAGALRLAIARALNEIDRENNRPTLKKAGFLTRDARVTERKKAGLKKARKASQFSKR</sequence>
<reference key="1">
    <citation type="journal article" date="2004" name="Mol. Plant Microbe Interact.">
        <title>The genome sequence of the Gram-positive sugarcane pathogen Leifsonia xyli subsp. xyli.</title>
        <authorList>
            <person name="Monteiro-Vitorello C.B."/>
            <person name="Camargo L.E.A."/>
            <person name="Van Sluys M.A."/>
            <person name="Kitajima J.P."/>
            <person name="Truffi D."/>
            <person name="do Amaral A.M."/>
            <person name="Harakava R."/>
            <person name="de Oliveira J.C.F."/>
            <person name="Wood D."/>
            <person name="de Oliveira M.C."/>
            <person name="Miyaki C.Y."/>
            <person name="Takita M.A."/>
            <person name="da Silva A.C.R."/>
            <person name="Furlan L.R."/>
            <person name="Carraro D.M."/>
            <person name="Camarotte G."/>
            <person name="Almeida N.F. Jr."/>
            <person name="Carrer H."/>
            <person name="Coutinho L.L."/>
            <person name="El-Dorry H.A."/>
            <person name="Ferro M.I.T."/>
            <person name="Gagliardi P.R."/>
            <person name="Giglioti E."/>
            <person name="Goldman M.H.S."/>
            <person name="Goldman G.H."/>
            <person name="Kimura E.T."/>
            <person name="Ferro E.S."/>
            <person name="Kuramae E.E."/>
            <person name="Lemos E.G.M."/>
            <person name="Lemos M.V.F."/>
            <person name="Mauro S.M.Z."/>
            <person name="Machado M.A."/>
            <person name="Marino C.L."/>
            <person name="Menck C.F."/>
            <person name="Nunes L.R."/>
            <person name="Oliveira R.C."/>
            <person name="Pereira G.G."/>
            <person name="Siqueira W."/>
            <person name="de Souza A.A."/>
            <person name="Tsai S.M."/>
            <person name="Zanca A.S."/>
            <person name="Simpson A.J.G."/>
            <person name="Brumbley S.M."/>
            <person name="Setubal J.C."/>
        </authorList>
    </citation>
    <scope>NUCLEOTIDE SEQUENCE [LARGE SCALE GENOMIC DNA]</scope>
    <source>
        <strain>CTCB07</strain>
    </source>
</reference>
<gene>
    <name evidence="1" type="primary">rpsI</name>
    <name type="ordered locus">Lxx20020</name>
</gene>
<evidence type="ECO:0000255" key="1">
    <source>
        <dbReference type="HAMAP-Rule" id="MF_00532"/>
    </source>
</evidence>
<evidence type="ECO:0000256" key="2">
    <source>
        <dbReference type="SAM" id="MobiDB-lite"/>
    </source>
</evidence>
<evidence type="ECO:0000305" key="3"/>
<keyword id="KW-1185">Reference proteome</keyword>
<keyword id="KW-0687">Ribonucleoprotein</keyword>
<keyword id="KW-0689">Ribosomal protein</keyword>
<accession>Q6AD27</accession>
<comment type="similarity">
    <text evidence="1">Belongs to the universal ribosomal protein uS9 family.</text>
</comment>
<organism>
    <name type="scientific">Leifsonia xyli subsp. xyli (strain CTCB07)</name>
    <dbReference type="NCBI Taxonomy" id="281090"/>
    <lineage>
        <taxon>Bacteria</taxon>
        <taxon>Bacillati</taxon>
        <taxon>Actinomycetota</taxon>
        <taxon>Actinomycetes</taxon>
        <taxon>Micrococcales</taxon>
        <taxon>Microbacteriaceae</taxon>
        <taxon>Leifsonia</taxon>
    </lineage>
</organism>